<organism>
    <name type="scientific">Drosophila melanogaster</name>
    <name type="common">Fruit fly</name>
    <dbReference type="NCBI Taxonomy" id="7227"/>
    <lineage>
        <taxon>Eukaryota</taxon>
        <taxon>Metazoa</taxon>
        <taxon>Ecdysozoa</taxon>
        <taxon>Arthropoda</taxon>
        <taxon>Hexapoda</taxon>
        <taxon>Insecta</taxon>
        <taxon>Pterygota</taxon>
        <taxon>Neoptera</taxon>
        <taxon>Endopterygota</taxon>
        <taxon>Diptera</taxon>
        <taxon>Brachycera</taxon>
        <taxon>Muscomorpha</taxon>
        <taxon>Ephydroidea</taxon>
        <taxon>Drosophilidae</taxon>
        <taxon>Drosophila</taxon>
        <taxon>Sophophora</taxon>
    </lineage>
</organism>
<name>LCP9_DROME</name>
<comment type="function">
    <text evidence="4">Component of the cuticle of the larva.</text>
</comment>
<accession>P82384</accession>
<accession>Q9W109</accession>
<proteinExistence type="evidence at protein level"/>
<keyword id="KW-0193">Cuticle</keyword>
<keyword id="KW-0903">Direct protein sequencing</keyword>
<keyword id="KW-1185">Reference proteome</keyword>
<keyword id="KW-0732">Signal</keyword>
<evidence type="ECO:0000255" key="1">
    <source>
        <dbReference type="PROSITE-ProRule" id="PRU00497"/>
    </source>
</evidence>
<evidence type="ECO:0000269" key="2">
    <source>
    </source>
</evidence>
<evidence type="ECO:0000269" key="3">
    <source>
    </source>
</evidence>
<evidence type="ECO:0000305" key="4"/>
<dbReference type="EMBL" id="AE013599">
    <property type="protein sequence ID" value="AAF47269.1"/>
    <property type="molecule type" value="Genomic_DNA"/>
</dbReference>
<dbReference type="RefSeq" id="NP_523854.1">
    <property type="nucleotide sequence ID" value="NM_079130.2"/>
</dbReference>
<dbReference type="FunCoup" id="P82384">
    <property type="interactions" value="5"/>
</dbReference>
<dbReference type="STRING" id="7227.FBpp0072335"/>
<dbReference type="PaxDb" id="7227-FBpp0072335"/>
<dbReference type="DNASU" id="37963"/>
<dbReference type="EnsemblMetazoa" id="FBtr0072430">
    <property type="protein sequence ID" value="FBpp0072335"/>
    <property type="gene ID" value="FBgn0025578"/>
</dbReference>
<dbReference type="GeneID" id="37963"/>
<dbReference type="KEGG" id="dme:Dmel_CG16914"/>
<dbReference type="AGR" id="FB:FBgn0025578"/>
<dbReference type="CTD" id="37963"/>
<dbReference type="FlyBase" id="FBgn0025578">
    <property type="gene designation" value="Lcp9"/>
</dbReference>
<dbReference type="VEuPathDB" id="VectorBase:FBgn0025578"/>
<dbReference type="eggNOG" id="ENOG502TCUU">
    <property type="taxonomic scope" value="Eukaryota"/>
</dbReference>
<dbReference type="HOGENOM" id="CLU_065450_7_2_1"/>
<dbReference type="InParanoid" id="P82384"/>
<dbReference type="OMA" id="EYNEVNP"/>
<dbReference type="OrthoDB" id="6629557at2759"/>
<dbReference type="PhylomeDB" id="P82384"/>
<dbReference type="BioGRID-ORCS" id="37963">
    <property type="hits" value="0 hits in 1 CRISPR screen"/>
</dbReference>
<dbReference type="ChiTaRS" id="Lcp9">
    <property type="organism name" value="fly"/>
</dbReference>
<dbReference type="GenomeRNAi" id="37963"/>
<dbReference type="PRO" id="PR:P82384"/>
<dbReference type="Proteomes" id="UP000000803">
    <property type="component" value="Chromosome 2R"/>
</dbReference>
<dbReference type="Bgee" id="FBgn0025578">
    <property type="expression patterns" value="Expressed in larva and 5 other cell types or tissues"/>
</dbReference>
<dbReference type="ExpressionAtlas" id="P82384">
    <property type="expression patterns" value="baseline and differential"/>
</dbReference>
<dbReference type="GO" id="GO:0062129">
    <property type="term" value="C:chitin-based extracellular matrix"/>
    <property type="evidence" value="ECO:0000255"/>
    <property type="project" value="FlyBase"/>
</dbReference>
<dbReference type="GO" id="GO:0005576">
    <property type="term" value="C:extracellular region"/>
    <property type="evidence" value="ECO:0000303"/>
    <property type="project" value="UniProtKB"/>
</dbReference>
<dbReference type="GO" id="GO:0008010">
    <property type="term" value="F:structural constituent of chitin-based larval cuticle"/>
    <property type="evidence" value="ECO:0000255"/>
    <property type="project" value="FlyBase"/>
</dbReference>
<dbReference type="GO" id="GO:0040003">
    <property type="term" value="P:chitin-based cuticle development"/>
    <property type="evidence" value="ECO:0000255"/>
    <property type="project" value="FlyBase"/>
</dbReference>
<dbReference type="GO" id="GO:0008363">
    <property type="term" value="P:larval chitin-based cuticle development"/>
    <property type="evidence" value="ECO:0000303"/>
    <property type="project" value="UniProtKB"/>
</dbReference>
<dbReference type="InterPro" id="IPR031311">
    <property type="entry name" value="CHIT_BIND_RR_consensus"/>
</dbReference>
<dbReference type="InterPro" id="IPR050468">
    <property type="entry name" value="Cuticle_Struct_Prot"/>
</dbReference>
<dbReference type="InterPro" id="IPR000618">
    <property type="entry name" value="Insect_cuticle"/>
</dbReference>
<dbReference type="PANTHER" id="PTHR10380">
    <property type="entry name" value="CUTICLE PROTEIN"/>
    <property type="match status" value="1"/>
</dbReference>
<dbReference type="PANTHER" id="PTHR10380:SF228">
    <property type="entry name" value="CUTICULAR PROTEIN 11A-RELATED"/>
    <property type="match status" value="1"/>
</dbReference>
<dbReference type="Pfam" id="PF00379">
    <property type="entry name" value="Chitin_bind_4"/>
    <property type="match status" value="1"/>
</dbReference>
<dbReference type="PRINTS" id="PR00947">
    <property type="entry name" value="CUTICLE"/>
</dbReference>
<dbReference type="PROSITE" id="PS00233">
    <property type="entry name" value="CHIT_BIND_RR_1"/>
    <property type="match status" value="1"/>
</dbReference>
<dbReference type="PROSITE" id="PS51155">
    <property type="entry name" value="CHIT_BIND_RR_2"/>
    <property type="match status" value="1"/>
</dbReference>
<reference evidence="4" key="1">
    <citation type="journal article" date="2000" name="Science">
        <title>The genome sequence of Drosophila melanogaster.</title>
        <authorList>
            <person name="Adams M.D."/>
            <person name="Celniker S.E."/>
            <person name="Holt R.A."/>
            <person name="Evans C.A."/>
            <person name="Gocayne J.D."/>
            <person name="Amanatides P.G."/>
            <person name="Scherer S.E."/>
            <person name="Li P.W."/>
            <person name="Hoskins R.A."/>
            <person name="Galle R.F."/>
            <person name="George R.A."/>
            <person name="Lewis S.E."/>
            <person name="Richards S."/>
            <person name="Ashburner M."/>
            <person name="Henderson S.N."/>
            <person name="Sutton G.G."/>
            <person name="Wortman J.R."/>
            <person name="Yandell M.D."/>
            <person name="Zhang Q."/>
            <person name="Chen L.X."/>
            <person name="Brandon R.C."/>
            <person name="Rogers Y.-H.C."/>
            <person name="Blazej R.G."/>
            <person name="Champe M."/>
            <person name="Pfeiffer B.D."/>
            <person name="Wan K.H."/>
            <person name="Doyle C."/>
            <person name="Baxter E.G."/>
            <person name="Helt G."/>
            <person name="Nelson C.R."/>
            <person name="Miklos G.L.G."/>
            <person name="Abril J.F."/>
            <person name="Agbayani A."/>
            <person name="An H.-J."/>
            <person name="Andrews-Pfannkoch C."/>
            <person name="Baldwin D."/>
            <person name="Ballew R.M."/>
            <person name="Basu A."/>
            <person name="Baxendale J."/>
            <person name="Bayraktaroglu L."/>
            <person name="Beasley E.M."/>
            <person name="Beeson K.Y."/>
            <person name="Benos P.V."/>
            <person name="Berman B.P."/>
            <person name="Bhandari D."/>
            <person name="Bolshakov S."/>
            <person name="Borkova D."/>
            <person name="Botchan M.R."/>
            <person name="Bouck J."/>
            <person name="Brokstein P."/>
            <person name="Brottier P."/>
            <person name="Burtis K.C."/>
            <person name="Busam D.A."/>
            <person name="Butler H."/>
            <person name="Cadieu E."/>
            <person name="Center A."/>
            <person name="Chandra I."/>
            <person name="Cherry J.M."/>
            <person name="Cawley S."/>
            <person name="Dahlke C."/>
            <person name="Davenport L.B."/>
            <person name="Davies P."/>
            <person name="de Pablos B."/>
            <person name="Delcher A."/>
            <person name="Deng Z."/>
            <person name="Mays A.D."/>
            <person name="Dew I."/>
            <person name="Dietz S.M."/>
            <person name="Dodson K."/>
            <person name="Doup L.E."/>
            <person name="Downes M."/>
            <person name="Dugan-Rocha S."/>
            <person name="Dunkov B.C."/>
            <person name="Dunn P."/>
            <person name="Durbin K.J."/>
            <person name="Evangelista C.C."/>
            <person name="Ferraz C."/>
            <person name="Ferriera S."/>
            <person name="Fleischmann W."/>
            <person name="Fosler C."/>
            <person name="Gabrielian A.E."/>
            <person name="Garg N.S."/>
            <person name="Gelbart W.M."/>
            <person name="Glasser K."/>
            <person name="Glodek A."/>
            <person name="Gong F."/>
            <person name="Gorrell J.H."/>
            <person name="Gu Z."/>
            <person name="Guan P."/>
            <person name="Harris M."/>
            <person name="Harris N.L."/>
            <person name="Harvey D.A."/>
            <person name="Heiman T.J."/>
            <person name="Hernandez J.R."/>
            <person name="Houck J."/>
            <person name="Hostin D."/>
            <person name="Houston K.A."/>
            <person name="Howland T.J."/>
            <person name="Wei M.-H."/>
            <person name="Ibegwam C."/>
            <person name="Jalali M."/>
            <person name="Kalush F."/>
            <person name="Karpen G.H."/>
            <person name="Ke Z."/>
            <person name="Kennison J.A."/>
            <person name="Ketchum K.A."/>
            <person name="Kimmel B.E."/>
            <person name="Kodira C.D."/>
            <person name="Kraft C.L."/>
            <person name="Kravitz S."/>
            <person name="Kulp D."/>
            <person name="Lai Z."/>
            <person name="Lasko P."/>
            <person name="Lei Y."/>
            <person name="Levitsky A.A."/>
            <person name="Li J.H."/>
            <person name="Li Z."/>
            <person name="Liang Y."/>
            <person name="Lin X."/>
            <person name="Liu X."/>
            <person name="Mattei B."/>
            <person name="McIntosh T.C."/>
            <person name="McLeod M.P."/>
            <person name="McPherson D."/>
            <person name="Merkulov G."/>
            <person name="Milshina N.V."/>
            <person name="Mobarry C."/>
            <person name="Morris J."/>
            <person name="Moshrefi A."/>
            <person name="Mount S.M."/>
            <person name="Moy M."/>
            <person name="Murphy B."/>
            <person name="Murphy L."/>
            <person name="Muzny D.M."/>
            <person name="Nelson D.L."/>
            <person name="Nelson D.R."/>
            <person name="Nelson K.A."/>
            <person name="Nixon K."/>
            <person name="Nusskern D.R."/>
            <person name="Pacleb J.M."/>
            <person name="Palazzolo M."/>
            <person name="Pittman G.S."/>
            <person name="Pan S."/>
            <person name="Pollard J."/>
            <person name="Puri V."/>
            <person name="Reese M.G."/>
            <person name="Reinert K."/>
            <person name="Remington K."/>
            <person name="Saunders R.D.C."/>
            <person name="Scheeler F."/>
            <person name="Shen H."/>
            <person name="Shue B.C."/>
            <person name="Siden-Kiamos I."/>
            <person name="Simpson M."/>
            <person name="Skupski M.P."/>
            <person name="Smith T.J."/>
            <person name="Spier E."/>
            <person name="Spradling A.C."/>
            <person name="Stapleton M."/>
            <person name="Strong R."/>
            <person name="Sun E."/>
            <person name="Svirskas R."/>
            <person name="Tector C."/>
            <person name="Turner R."/>
            <person name="Venter E."/>
            <person name="Wang A.H."/>
            <person name="Wang X."/>
            <person name="Wang Z.-Y."/>
            <person name="Wassarman D.A."/>
            <person name="Weinstock G.M."/>
            <person name="Weissenbach J."/>
            <person name="Williams S.M."/>
            <person name="Woodage T."/>
            <person name="Worley K.C."/>
            <person name="Wu D."/>
            <person name="Yang S."/>
            <person name="Yao Q.A."/>
            <person name="Ye J."/>
            <person name="Yeh R.-F."/>
            <person name="Zaveri J.S."/>
            <person name="Zhan M."/>
            <person name="Zhang G."/>
            <person name="Zhao Q."/>
            <person name="Zheng L."/>
            <person name="Zheng X.H."/>
            <person name="Zhong F.N."/>
            <person name="Zhong W."/>
            <person name="Zhou X."/>
            <person name="Zhu S.C."/>
            <person name="Zhu X."/>
            <person name="Smith H.O."/>
            <person name="Gibbs R.A."/>
            <person name="Myers E.W."/>
            <person name="Rubin G.M."/>
            <person name="Venter J.C."/>
        </authorList>
    </citation>
    <scope>NUCLEOTIDE SEQUENCE [LARGE SCALE GENOMIC DNA]</scope>
    <source>
        <strain evidence="2">Berkeley</strain>
    </source>
</reference>
<reference key="2">
    <citation type="journal article" date="2002" name="Genome Biol.">
        <title>Annotation of the Drosophila melanogaster euchromatic genome: a systematic review.</title>
        <authorList>
            <person name="Misra S."/>
            <person name="Crosby M.A."/>
            <person name="Mungall C.J."/>
            <person name="Matthews B.B."/>
            <person name="Campbell K.S."/>
            <person name="Hradecky P."/>
            <person name="Huang Y."/>
            <person name="Kaminker J.S."/>
            <person name="Millburn G.H."/>
            <person name="Prochnik S.E."/>
            <person name="Smith C.D."/>
            <person name="Tupy J.L."/>
            <person name="Whitfield E.J."/>
            <person name="Bayraktaroglu L."/>
            <person name="Berman B.P."/>
            <person name="Bettencourt B.R."/>
            <person name="Celniker S.E."/>
            <person name="de Grey A.D.N.J."/>
            <person name="Drysdale R.A."/>
            <person name="Harris N.L."/>
            <person name="Richter J."/>
            <person name="Russo S."/>
            <person name="Schroeder A.J."/>
            <person name="Shu S.Q."/>
            <person name="Stapleton M."/>
            <person name="Yamada C."/>
            <person name="Ashburner M."/>
            <person name="Gelbart W.M."/>
            <person name="Rubin G.M."/>
            <person name="Lewis S.E."/>
        </authorList>
    </citation>
    <scope>GENOME REANNOTATION</scope>
    <source>
        <strain>Berkeley</strain>
    </source>
</reference>
<reference key="3">
    <citation type="journal article" date="1998" name="Insect Biochem. Mol. Biol.">
        <title>Identification of proteins and developmental expression of RNAs encoded by the 65A cuticle protein gene cluster in Drosophila melanogaster.</title>
        <authorList>
            <person name="Charles J.-P."/>
            <person name="Chihara C."/>
            <person name="Nejad S."/>
            <person name="Riddiford L.M."/>
        </authorList>
    </citation>
    <scope>PROTEIN SEQUENCE OF 17-26</scope>
    <source>
        <strain>Oregon-R</strain>
        <tissue>Larva</tissue>
    </source>
</reference>
<feature type="signal peptide" evidence="3">
    <location>
        <begin position="1"/>
        <end position="16"/>
    </location>
</feature>
<feature type="chain" id="PRO_0000006396" description="Larval cuticle protein 9">
    <location>
        <begin position="17"/>
        <end position="92"/>
    </location>
</feature>
<feature type="domain" description="Chitin-binding type R&amp;R" evidence="1">
    <location>
        <begin position="31"/>
        <end position="92"/>
    </location>
</feature>
<sequence>MKFVIVLACLLAVVFANEEADVVKSDSEVNLLDFNYAYELSNHIRAVQTGALKEHDNWVVSGEYEYVAPNGKTVKVVYTADETGYHPKVVEA</sequence>
<protein>
    <recommendedName>
        <fullName>Larval cuticle protein 9</fullName>
    </recommendedName>
    <alternativeName>
        <fullName>Larval cuticle protein IX</fullName>
    </alternativeName>
</protein>
<gene>
    <name type="primary">Lcp9</name>
    <name type="ORF">CG16914</name>
</gene>